<comment type="function">
    <text evidence="1">Extracellular aminopeptidase that releases a wide variety of amino acids from natural peptides and contributes to pathogenicity.</text>
</comment>
<comment type="cofactor">
    <cofactor evidence="2">
        <name>Zn(2+)</name>
        <dbReference type="ChEBI" id="CHEBI:29105"/>
    </cofactor>
    <text evidence="2">Binds 2 Zn(2+) ions per subunit.</text>
</comment>
<comment type="subunit">
    <text evidence="1">Monomer.</text>
</comment>
<comment type="subcellular location">
    <subcellularLocation>
        <location evidence="1">Secreted</location>
    </subcellularLocation>
</comment>
<comment type="similarity">
    <text evidence="4">Belongs to the peptidase M28 family. M28A subfamily.</text>
</comment>
<reference key="1">
    <citation type="submission" date="2007-07" db="EMBL/GenBank/DDBJ databases">
        <title>Comparing putative pathogenicity factors between Trichophyton tonsurans and Trichophyton equinum.</title>
        <authorList>
            <person name="Preuett B.L."/>
            <person name="Brown J.T."/>
            <person name="Abdel-Rahman S.M."/>
        </authorList>
    </citation>
    <scope>NUCLEOTIDE SEQUENCE [GENOMIC DNA]</scope>
</reference>
<dbReference type="EC" id="3.4.11.-"/>
<dbReference type="EMBL" id="EU072468">
    <property type="protein sequence ID" value="ABU49645.1"/>
    <property type="molecule type" value="Genomic_DNA"/>
</dbReference>
<dbReference type="SMR" id="A7UI10"/>
<dbReference type="GlyCosmos" id="A7UI10">
    <property type="glycosylation" value="4 sites, No reported glycans"/>
</dbReference>
<dbReference type="VEuPathDB" id="FungiDB:TESG_06750"/>
<dbReference type="GO" id="GO:0005576">
    <property type="term" value="C:extracellular region"/>
    <property type="evidence" value="ECO:0007669"/>
    <property type="project" value="UniProtKB-SubCell"/>
</dbReference>
<dbReference type="GO" id="GO:0004177">
    <property type="term" value="F:aminopeptidase activity"/>
    <property type="evidence" value="ECO:0007669"/>
    <property type="project" value="UniProtKB-KW"/>
</dbReference>
<dbReference type="GO" id="GO:0046872">
    <property type="term" value="F:metal ion binding"/>
    <property type="evidence" value="ECO:0007669"/>
    <property type="project" value="UniProtKB-KW"/>
</dbReference>
<dbReference type="GO" id="GO:0008235">
    <property type="term" value="F:metalloexopeptidase activity"/>
    <property type="evidence" value="ECO:0007669"/>
    <property type="project" value="InterPro"/>
</dbReference>
<dbReference type="GO" id="GO:0006508">
    <property type="term" value="P:proteolysis"/>
    <property type="evidence" value="ECO:0007669"/>
    <property type="project" value="UniProtKB-KW"/>
</dbReference>
<dbReference type="CDD" id="cd03876">
    <property type="entry name" value="M28_SGAP_like"/>
    <property type="match status" value="1"/>
</dbReference>
<dbReference type="CDD" id="cd02130">
    <property type="entry name" value="PA_ScAPY_like"/>
    <property type="match status" value="1"/>
</dbReference>
<dbReference type="FunFam" id="3.40.630.10:FF:000054">
    <property type="entry name" value="Peptide hydrolase"/>
    <property type="match status" value="1"/>
</dbReference>
<dbReference type="Gene3D" id="3.50.30.30">
    <property type="match status" value="1"/>
</dbReference>
<dbReference type="Gene3D" id="3.40.630.10">
    <property type="entry name" value="Zn peptidases"/>
    <property type="match status" value="1"/>
</dbReference>
<dbReference type="InterPro" id="IPR045175">
    <property type="entry name" value="M28_fam"/>
</dbReference>
<dbReference type="InterPro" id="IPR041756">
    <property type="entry name" value="M28_SGAP-like"/>
</dbReference>
<dbReference type="InterPro" id="IPR046450">
    <property type="entry name" value="PA_dom_sf"/>
</dbReference>
<dbReference type="InterPro" id="IPR003137">
    <property type="entry name" value="PA_domain"/>
</dbReference>
<dbReference type="InterPro" id="IPR007484">
    <property type="entry name" value="Peptidase_M28"/>
</dbReference>
<dbReference type="PANTHER" id="PTHR12147">
    <property type="entry name" value="METALLOPEPTIDASE M28 FAMILY MEMBER"/>
    <property type="match status" value="1"/>
</dbReference>
<dbReference type="PANTHER" id="PTHR12147:SF57">
    <property type="entry name" value="PEPTIDE HYDROLASE"/>
    <property type="match status" value="1"/>
</dbReference>
<dbReference type="Pfam" id="PF02225">
    <property type="entry name" value="PA"/>
    <property type="match status" value="1"/>
</dbReference>
<dbReference type="Pfam" id="PF04389">
    <property type="entry name" value="Peptidase_M28"/>
    <property type="match status" value="1"/>
</dbReference>
<dbReference type="SUPFAM" id="SSF52025">
    <property type="entry name" value="PA domain"/>
    <property type="match status" value="1"/>
</dbReference>
<dbReference type="SUPFAM" id="SSF53187">
    <property type="entry name" value="Zn-dependent exopeptidases"/>
    <property type="match status" value="1"/>
</dbReference>
<keyword id="KW-0031">Aminopeptidase</keyword>
<keyword id="KW-0325">Glycoprotein</keyword>
<keyword id="KW-0378">Hydrolase</keyword>
<keyword id="KW-0479">Metal-binding</keyword>
<keyword id="KW-0482">Metalloprotease</keyword>
<keyword id="KW-0645">Protease</keyword>
<keyword id="KW-0964">Secreted</keyword>
<keyword id="KW-0732">Signal</keyword>
<keyword id="KW-0843">Virulence</keyword>
<keyword id="KW-0862">Zinc</keyword>
<gene>
    <name type="primary">LAP2</name>
</gene>
<name>LAP2_TRITO</name>
<proteinExistence type="inferred from homology"/>
<evidence type="ECO:0000250" key="1"/>
<evidence type="ECO:0000250" key="2">
    <source>
        <dbReference type="UniProtKB" id="P80561"/>
    </source>
</evidence>
<evidence type="ECO:0000255" key="3"/>
<evidence type="ECO:0000305" key="4"/>
<sequence length="495" mass="53211">MKSQLLSLAVAVSTISQGVVGQEPFGWPFKPMVTQDDLQNKIKLKDIMAGIEKLQSFSDAHPEKNRVFGGNGHKDTVEWIYNELKATGYYNVKKQEQVHLWSHAEAALSANGKDLKASAMSYSPPANKIMAELVVAKNNGCNATDYPENTQGKIVLIQRGVCSFGEKSSQAGDAKAIGAVVYNNVPGSLAGTLGGLDKRHVPTAGLSQEDGKNLASLVASGKVDVTMNVVSLFENRTTWNVIAETKGGDHNNVVMLGAHSDSVDAGPGINDNGSGSIGIMTVAKALTNFKLNNAVRFAWWTAEEFGLLGSTFYVDSLDDRELHKVKLYLNFDMIGSPNFANQIYDGDGSAYNMTGPAGSAEIEYLFEKFFDDQGLPHQPTAFTGRSDYSAFIKRNVPAGGLFTGAEVVKTPEQVKLFGGEAGVAYDKNYHGKGDTVANINKGAIFLNTRAIAYSVAEYARSLKGFPTRPKTGKRAVNPQYAKMPGGGCGHHTVFM</sequence>
<protein>
    <recommendedName>
        <fullName>Leucine aminopeptidase 2</fullName>
        <ecNumber>3.4.11.-</ecNumber>
    </recommendedName>
    <alternativeName>
        <fullName>Leucyl aminopeptidase 2</fullName>
        <shortName>LAP2</shortName>
    </alternativeName>
</protein>
<organism>
    <name type="scientific">Trichophyton tonsurans</name>
    <name type="common">Scalp ringworm fungus</name>
    <dbReference type="NCBI Taxonomy" id="34387"/>
    <lineage>
        <taxon>Eukaryota</taxon>
        <taxon>Fungi</taxon>
        <taxon>Dikarya</taxon>
        <taxon>Ascomycota</taxon>
        <taxon>Pezizomycotina</taxon>
        <taxon>Eurotiomycetes</taxon>
        <taxon>Eurotiomycetidae</taxon>
        <taxon>Onygenales</taxon>
        <taxon>Arthrodermataceae</taxon>
        <taxon>Trichophyton</taxon>
    </lineage>
</organism>
<feature type="signal peptide" evidence="3">
    <location>
        <begin position="1"/>
        <end position="21"/>
    </location>
</feature>
<feature type="chain" id="PRO_0000384097" description="Leucine aminopeptidase 2">
    <location>
        <begin position="22"/>
        <end position="495"/>
    </location>
</feature>
<feature type="domain" description="PA">
    <location>
        <begin position="124"/>
        <end position="218"/>
    </location>
</feature>
<feature type="active site" description="Proton acceptor" evidence="2">
    <location>
        <position position="303"/>
    </location>
</feature>
<feature type="binding site" evidence="2">
    <location>
        <position position="259"/>
    </location>
    <ligand>
        <name>Zn(2+)</name>
        <dbReference type="ChEBI" id="CHEBI:29105"/>
        <label>1</label>
        <note>catalytic</note>
    </ligand>
</feature>
<feature type="binding site" evidence="2">
    <location>
        <position position="271"/>
    </location>
    <ligand>
        <name>Zn(2+)</name>
        <dbReference type="ChEBI" id="CHEBI:29105"/>
        <label>1</label>
        <note>catalytic</note>
    </ligand>
</feature>
<feature type="binding site" evidence="2">
    <location>
        <position position="271"/>
    </location>
    <ligand>
        <name>Zn(2+)</name>
        <dbReference type="ChEBI" id="CHEBI:29105"/>
        <label>2</label>
        <note>catalytic</note>
    </ligand>
</feature>
<feature type="binding site" evidence="2">
    <location>
        <position position="304"/>
    </location>
    <ligand>
        <name>Zn(2+)</name>
        <dbReference type="ChEBI" id="CHEBI:29105"/>
        <label>2</label>
        <note>catalytic</note>
    </ligand>
</feature>
<feature type="binding site" evidence="2">
    <location>
        <position position="332"/>
    </location>
    <ligand>
        <name>Zn(2+)</name>
        <dbReference type="ChEBI" id="CHEBI:29105"/>
        <label>1</label>
        <note>catalytic</note>
    </ligand>
</feature>
<feature type="binding site" evidence="2">
    <location>
        <position position="430"/>
    </location>
    <ligand>
        <name>Zn(2+)</name>
        <dbReference type="ChEBI" id="CHEBI:29105"/>
        <label>2</label>
        <note>catalytic</note>
    </ligand>
</feature>
<feature type="site" description="Transition state stabilizer" evidence="2">
    <location>
        <position position="429"/>
    </location>
</feature>
<feature type="glycosylation site" description="N-linked (GlcNAc...) asparagine" evidence="3">
    <location>
        <position position="142"/>
    </location>
</feature>
<feature type="glycosylation site" description="N-linked (GlcNAc...) asparagine" evidence="3">
    <location>
        <position position="235"/>
    </location>
</feature>
<feature type="glycosylation site" description="N-linked (GlcNAc...) asparagine" evidence="3">
    <location>
        <position position="272"/>
    </location>
</feature>
<feature type="glycosylation site" description="N-linked (GlcNAc...) asparagine" evidence="3">
    <location>
        <position position="352"/>
    </location>
</feature>
<accession>A7UI10</accession>